<feature type="chain" id="PRO_1000012541" description="UPF0122 protein SH1678">
    <location>
        <begin position="1"/>
        <end position="110"/>
    </location>
</feature>
<accession>Q4L5T8</accession>
<reference key="1">
    <citation type="journal article" date="2005" name="J. Bacteriol.">
        <title>Whole-genome sequencing of Staphylococcus haemolyticus uncovers the extreme plasticity of its genome and the evolution of human-colonizing staphylococcal species.</title>
        <authorList>
            <person name="Takeuchi F."/>
            <person name="Watanabe S."/>
            <person name="Baba T."/>
            <person name="Yuzawa H."/>
            <person name="Ito T."/>
            <person name="Morimoto Y."/>
            <person name="Kuroda M."/>
            <person name="Cui L."/>
            <person name="Takahashi M."/>
            <person name="Ankai A."/>
            <person name="Baba S."/>
            <person name="Fukui S."/>
            <person name="Lee J.C."/>
            <person name="Hiramatsu K."/>
        </authorList>
    </citation>
    <scope>NUCLEOTIDE SEQUENCE [LARGE SCALE GENOMIC DNA]</scope>
    <source>
        <strain>JCSC1435</strain>
    </source>
</reference>
<comment type="function">
    <text evidence="1">Might take part in the signal recognition particle (SRP) pathway. This is inferred from the conservation of its genetic proximity to ftsY/ffh. May be a regulatory protein.</text>
</comment>
<comment type="similarity">
    <text evidence="1">Belongs to the UPF0122 family.</text>
</comment>
<evidence type="ECO:0000255" key="1">
    <source>
        <dbReference type="HAMAP-Rule" id="MF_00245"/>
    </source>
</evidence>
<gene>
    <name type="ordered locus">SH1678</name>
</gene>
<name>Y1678_STAHJ</name>
<sequence>MGKNDLVKTLRMNYLFDFYQTLLTEKQRNYMELFYLRDYSLSEIAETFDVSRQAVYDNIRRTGDLVEDYEAKLNLYEKFEQRRKIYDDMKQTLNDSKKLEQYINQLEELE</sequence>
<proteinExistence type="inferred from homology"/>
<organism>
    <name type="scientific">Staphylococcus haemolyticus (strain JCSC1435)</name>
    <dbReference type="NCBI Taxonomy" id="279808"/>
    <lineage>
        <taxon>Bacteria</taxon>
        <taxon>Bacillati</taxon>
        <taxon>Bacillota</taxon>
        <taxon>Bacilli</taxon>
        <taxon>Bacillales</taxon>
        <taxon>Staphylococcaceae</taxon>
        <taxon>Staphylococcus</taxon>
    </lineage>
</organism>
<dbReference type="EMBL" id="AP006716">
    <property type="protein sequence ID" value="BAE04987.1"/>
    <property type="molecule type" value="Genomic_DNA"/>
</dbReference>
<dbReference type="RefSeq" id="WP_011275964.1">
    <property type="nucleotide sequence ID" value="NC_007168.1"/>
</dbReference>
<dbReference type="SMR" id="Q4L5T8"/>
<dbReference type="KEGG" id="sha:SH1678"/>
<dbReference type="eggNOG" id="COG2739">
    <property type="taxonomic scope" value="Bacteria"/>
</dbReference>
<dbReference type="HOGENOM" id="CLU_129218_1_1_9"/>
<dbReference type="OrthoDB" id="6392at2"/>
<dbReference type="Proteomes" id="UP000000543">
    <property type="component" value="Chromosome"/>
</dbReference>
<dbReference type="Gene3D" id="1.10.10.10">
    <property type="entry name" value="Winged helix-like DNA-binding domain superfamily/Winged helix DNA-binding domain"/>
    <property type="match status" value="1"/>
</dbReference>
<dbReference type="HAMAP" id="MF_00245">
    <property type="entry name" value="UPF0122"/>
    <property type="match status" value="1"/>
</dbReference>
<dbReference type="InterPro" id="IPR013324">
    <property type="entry name" value="RNA_pol_sigma_r3/r4-like"/>
</dbReference>
<dbReference type="InterPro" id="IPR007394">
    <property type="entry name" value="UPF0122"/>
</dbReference>
<dbReference type="InterPro" id="IPR054831">
    <property type="entry name" value="UPF0122_fam_protein"/>
</dbReference>
<dbReference type="InterPro" id="IPR036388">
    <property type="entry name" value="WH-like_DNA-bd_sf"/>
</dbReference>
<dbReference type="NCBIfam" id="NF001067">
    <property type="entry name" value="PRK00118.1-2"/>
    <property type="match status" value="1"/>
</dbReference>
<dbReference type="NCBIfam" id="NF001070">
    <property type="entry name" value="PRK00118.1-6"/>
    <property type="match status" value="1"/>
</dbReference>
<dbReference type="NCBIfam" id="NF045758">
    <property type="entry name" value="YlxM"/>
    <property type="match status" value="1"/>
</dbReference>
<dbReference type="PANTHER" id="PTHR40083">
    <property type="entry name" value="UPF0122 PROTEIN CBO2450/CLC_2298"/>
    <property type="match status" value="1"/>
</dbReference>
<dbReference type="PANTHER" id="PTHR40083:SF1">
    <property type="entry name" value="UPF0122 PROTEIN YLXM"/>
    <property type="match status" value="1"/>
</dbReference>
<dbReference type="Pfam" id="PF04297">
    <property type="entry name" value="UPF0122"/>
    <property type="match status" value="1"/>
</dbReference>
<dbReference type="SUPFAM" id="SSF88659">
    <property type="entry name" value="Sigma3 and sigma4 domains of RNA polymerase sigma factors"/>
    <property type="match status" value="1"/>
</dbReference>
<protein>
    <recommendedName>
        <fullName evidence="1">UPF0122 protein SH1678</fullName>
    </recommendedName>
</protein>